<dbReference type="EMBL" id="AE017283">
    <property type="protein sequence ID" value="AAT83191.1"/>
    <property type="molecule type" value="Genomic_DNA"/>
</dbReference>
<dbReference type="RefSeq" id="WP_002516115.1">
    <property type="nucleotide sequence ID" value="NZ_CP025935.1"/>
</dbReference>
<dbReference type="PDB" id="8CRX">
    <property type="method" value="EM"/>
    <property type="resolution" value="2.78 A"/>
    <property type="chains" value="P=1-147"/>
</dbReference>
<dbReference type="PDB" id="8CWO">
    <property type="method" value="EM"/>
    <property type="resolution" value="2.84 A"/>
    <property type="chains" value="P=1-147"/>
</dbReference>
<dbReference type="PDBsum" id="8CRX"/>
<dbReference type="PDBsum" id="8CWO"/>
<dbReference type="SMR" id="Q6A7S4"/>
<dbReference type="EnsemblBacteria" id="AAT83191">
    <property type="protein sequence ID" value="AAT83191"/>
    <property type="gene ID" value="PPA1443"/>
</dbReference>
<dbReference type="GeneID" id="92857418"/>
<dbReference type="KEGG" id="pac:PPA1443"/>
<dbReference type="eggNOG" id="COG0228">
    <property type="taxonomic scope" value="Bacteria"/>
</dbReference>
<dbReference type="HOGENOM" id="CLU_100590_1_1_11"/>
<dbReference type="Proteomes" id="UP000000603">
    <property type="component" value="Chromosome"/>
</dbReference>
<dbReference type="GO" id="GO:0005737">
    <property type="term" value="C:cytoplasm"/>
    <property type="evidence" value="ECO:0007669"/>
    <property type="project" value="UniProtKB-ARBA"/>
</dbReference>
<dbReference type="GO" id="GO:0015935">
    <property type="term" value="C:small ribosomal subunit"/>
    <property type="evidence" value="ECO:0007669"/>
    <property type="project" value="TreeGrafter"/>
</dbReference>
<dbReference type="GO" id="GO:0003735">
    <property type="term" value="F:structural constituent of ribosome"/>
    <property type="evidence" value="ECO:0007669"/>
    <property type="project" value="InterPro"/>
</dbReference>
<dbReference type="GO" id="GO:0006412">
    <property type="term" value="P:translation"/>
    <property type="evidence" value="ECO:0007669"/>
    <property type="project" value="UniProtKB-UniRule"/>
</dbReference>
<dbReference type="Gene3D" id="3.30.1320.10">
    <property type="match status" value="1"/>
</dbReference>
<dbReference type="HAMAP" id="MF_00385">
    <property type="entry name" value="Ribosomal_bS16"/>
    <property type="match status" value="1"/>
</dbReference>
<dbReference type="InterPro" id="IPR000307">
    <property type="entry name" value="Ribosomal_bS16"/>
</dbReference>
<dbReference type="InterPro" id="IPR020592">
    <property type="entry name" value="Ribosomal_bS16_CS"/>
</dbReference>
<dbReference type="InterPro" id="IPR023803">
    <property type="entry name" value="Ribosomal_bS16_dom_sf"/>
</dbReference>
<dbReference type="NCBIfam" id="NF011093">
    <property type="entry name" value="PRK14520.1"/>
    <property type="match status" value="1"/>
</dbReference>
<dbReference type="NCBIfam" id="TIGR00002">
    <property type="entry name" value="S16"/>
    <property type="match status" value="1"/>
</dbReference>
<dbReference type="PANTHER" id="PTHR12919">
    <property type="entry name" value="30S RIBOSOMAL PROTEIN S16"/>
    <property type="match status" value="1"/>
</dbReference>
<dbReference type="PANTHER" id="PTHR12919:SF20">
    <property type="entry name" value="SMALL RIBOSOMAL SUBUNIT PROTEIN BS16M"/>
    <property type="match status" value="1"/>
</dbReference>
<dbReference type="Pfam" id="PF00886">
    <property type="entry name" value="Ribosomal_S16"/>
    <property type="match status" value="1"/>
</dbReference>
<dbReference type="SUPFAM" id="SSF54565">
    <property type="entry name" value="Ribosomal protein S16"/>
    <property type="match status" value="1"/>
</dbReference>
<dbReference type="PROSITE" id="PS00732">
    <property type="entry name" value="RIBOSOMAL_S16"/>
    <property type="match status" value="1"/>
</dbReference>
<feature type="chain" id="PRO_0000243847" description="Small ribosomal subunit protein bS16">
    <location>
        <begin position="1"/>
        <end position="147"/>
    </location>
</feature>
<feature type="region of interest" description="Disordered" evidence="2">
    <location>
        <begin position="81"/>
        <end position="147"/>
    </location>
</feature>
<feature type="compositionally biased region" description="Basic and acidic residues" evidence="2">
    <location>
        <begin position="95"/>
        <end position="104"/>
    </location>
</feature>
<feature type="compositionally biased region" description="Basic and acidic residues" evidence="2">
    <location>
        <begin position="114"/>
        <end position="125"/>
    </location>
</feature>
<feature type="compositionally biased region" description="Low complexity" evidence="2">
    <location>
        <begin position="126"/>
        <end position="140"/>
    </location>
</feature>
<feature type="strand" evidence="4">
    <location>
        <begin position="3"/>
        <end position="12"/>
    </location>
</feature>
<feature type="strand" evidence="4">
    <location>
        <begin position="15"/>
        <end position="24"/>
    </location>
</feature>
<feature type="strand" evidence="4">
    <location>
        <begin position="34"/>
        <end position="44"/>
    </location>
</feature>
<feature type="strand" evidence="4">
    <location>
        <begin position="48"/>
        <end position="51"/>
    </location>
</feature>
<feature type="helix" evidence="4">
    <location>
        <begin position="53"/>
        <end position="62"/>
    </location>
</feature>
<feature type="helix" evidence="4">
    <location>
        <begin position="68"/>
        <end position="77"/>
    </location>
</feature>
<feature type="helix" evidence="4">
    <location>
        <begin position="79"/>
        <end position="82"/>
    </location>
</feature>
<feature type="helix" evidence="4">
    <location>
        <begin position="102"/>
        <end position="111"/>
    </location>
</feature>
<feature type="helix" evidence="4">
    <location>
        <begin position="114"/>
        <end position="128"/>
    </location>
</feature>
<reference key="1">
    <citation type="journal article" date="2004" name="Science">
        <title>The complete genome sequence of Propionibacterium acnes, a commensal of human skin.</title>
        <authorList>
            <person name="Brueggemann H."/>
            <person name="Henne A."/>
            <person name="Hoster F."/>
            <person name="Liesegang H."/>
            <person name="Wiezer A."/>
            <person name="Strittmatter A."/>
            <person name="Hujer S."/>
            <person name="Duerre P."/>
            <person name="Gottschalk G."/>
        </authorList>
    </citation>
    <scope>NUCLEOTIDE SEQUENCE [LARGE SCALE GENOMIC DNA]</scope>
    <source>
        <strain>DSM 16379 / KPA171202</strain>
    </source>
</reference>
<gene>
    <name evidence="1" type="primary">rpsP</name>
    <name type="ordered locus">PPA1443</name>
</gene>
<sequence length="147" mass="15956">MATKIRLKRLGKIRTPHYRVVVMDSRAKRDGRAIEEIGQYHPKADPSVIVIDSERVQYWLGVGAQPTEAVVALLKRTGDWQKFTGDTSPSGVKPQPERPNKDDLFNAALAEADEAPREAITKKSEGAAADEASESAAGDNSGEKAEA</sequence>
<keyword id="KW-0002">3D-structure</keyword>
<keyword id="KW-0687">Ribonucleoprotein</keyword>
<keyword id="KW-0689">Ribosomal protein</keyword>
<organism>
    <name type="scientific">Cutibacterium acnes (strain DSM 16379 / KPA171202)</name>
    <name type="common">Propionibacterium acnes</name>
    <dbReference type="NCBI Taxonomy" id="267747"/>
    <lineage>
        <taxon>Bacteria</taxon>
        <taxon>Bacillati</taxon>
        <taxon>Actinomycetota</taxon>
        <taxon>Actinomycetes</taxon>
        <taxon>Propionibacteriales</taxon>
        <taxon>Propionibacteriaceae</taxon>
        <taxon>Cutibacterium</taxon>
    </lineage>
</organism>
<evidence type="ECO:0000255" key="1">
    <source>
        <dbReference type="HAMAP-Rule" id="MF_00385"/>
    </source>
</evidence>
<evidence type="ECO:0000256" key="2">
    <source>
        <dbReference type="SAM" id="MobiDB-lite"/>
    </source>
</evidence>
<evidence type="ECO:0000305" key="3"/>
<evidence type="ECO:0007829" key="4">
    <source>
        <dbReference type="PDB" id="8CWO"/>
    </source>
</evidence>
<accession>Q6A7S4</accession>
<proteinExistence type="evidence at protein level"/>
<comment type="similarity">
    <text evidence="1">Belongs to the bacterial ribosomal protein bS16 family.</text>
</comment>
<name>RS16_CUTAK</name>
<protein>
    <recommendedName>
        <fullName evidence="1">Small ribosomal subunit protein bS16</fullName>
    </recommendedName>
    <alternativeName>
        <fullName evidence="3">30S ribosomal protein S16</fullName>
    </alternativeName>
</protein>